<evidence type="ECO:0000250" key="1"/>
<evidence type="ECO:0000305" key="2"/>
<dbReference type="EC" id="3.1.2.-"/>
<dbReference type="EMBL" id="BC120447">
    <property type="protein sequence ID" value="AAI20448.1"/>
    <property type="molecule type" value="mRNA"/>
</dbReference>
<dbReference type="RefSeq" id="NP_001069008.2">
    <property type="nucleotide sequence ID" value="NM_001075540.2"/>
</dbReference>
<dbReference type="SMR" id="Q0VBY3"/>
<dbReference type="STRING" id="9913.ENSBTAP00000073831"/>
<dbReference type="PaxDb" id="9913-ENSBTAP00000003220"/>
<dbReference type="GeneID" id="511836"/>
<dbReference type="KEGG" id="bta:511836"/>
<dbReference type="CTD" id="84264"/>
<dbReference type="eggNOG" id="KOG0813">
    <property type="taxonomic scope" value="Eukaryota"/>
</dbReference>
<dbReference type="InParanoid" id="Q0VBY3"/>
<dbReference type="OrthoDB" id="515692at2759"/>
<dbReference type="Proteomes" id="UP000009136">
    <property type="component" value="Unplaced"/>
</dbReference>
<dbReference type="GO" id="GO:0004416">
    <property type="term" value="F:hydroxyacylglutathione hydrolase activity"/>
    <property type="evidence" value="ECO:0000318"/>
    <property type="project" value="GO_Central"/>
</dbReference>
<dbReference type="GO" id="GO:0046872">
    <property type="term" value="F:metal ion binding"/>
    <property type="evidence" value="ECO:0007669"/>
    <property type="project" value="UniProtKB-KW"/>
</dbReference>
<dbReference type="CDD" id="cd07723">
    <property type="entry name" value="hydroxyacylglutathione_hydrolase_MBL-fold"/>
    <property type="match status" value="1"/>
</dbReference>
<dbReference type="Gene3D" id="3.60.15.10">
    <property type="entry name" value="Ribonuclease Z/Hydroxyacylglutathione hydrolase-like"/>
    <property type="match status" value="1"/>
</dbReference>
<dbReference type="InterPro" id="IPR035680">
    <property type="entry name" value="Clx_II_MBL"/>
</dbReference>
<dbReference type="InterPro" id="IPR001279">
    <property type="entry name" value="Metallo-B-lactamas"/>
</dbReference>
<dbReference type="InterPro" id="IPR036866">
    <property type="entry name" value="RibonucZ/Hydroxyglut_hydro"/>
</dbReference>
<dbReference type="PANTHER" id="PTHR11935">
    <property type="entry name" value="BETA LACTAMASE DOMAIN"/>
    <property type="match status" value="1"/>
</dbReference>
<dbReference type="PANTHER" id="PTHR11935:SF77">
    <property type="entry name" value="HYDROXYACYLGLUTATHIONE HYDROLASE-LIKE PROTEIN"/>
    <property type="match status" value="1"/>
</dbReference>
<dbReference type="Pfam" id="PF00753">
    <property type="entry name" value="Lactamase_B"/>
    <property type="match status" value="1"/>
</dbReference>
<dbReference type="SMART" id="SM00849">
    <property type="entry name" value="Lactamase_B"/>
    <property type="match status" value="1"/>
</dbReference>
<dbReference type="SUPFAM" id="SSF56281">
    <property type="entry name" value="Metallo-hydrolase/oxidoreductase"/>
    <property type="match status" value="1"/>
</dbReference>
<reference key="1">
    <citation type="submission" date="2006-08" db="EMBL/GenBank/DDBJ databases">
        <authorList>
            <consortium name="NIH - Mammalian Gene Collection (MGC) project"/>
        </authorList>
    </citation>
    <scope>NUCLEOTIDE SEQUENCE [LARGE SCALE MRNA]</scope>
    <source>
        <strain>Hereford</strain>
        <tissue>Basal ganglia</tissue>
    </source>
</reference>
<proteinExistence type="evidence at transcript level"/>
<name>HAGHL_BOVIN</name>
<keyword id="KW-0378">Hydrolase</keyword>
<keyword id="KW-0479">Metal-binding</keyword>
<keyword id="KW-1185">Reference proteome</keyword>
<keyword id="KW-0862">Zinc</keyword>
<protein>
    <recommendedName>
        <fullName>Hydroxyacylglutathione hydrolase-like protein</fullName>
        <ecNumber>3.1.2.-</ecNumber>
    </recommendedName>
</protein>
<feature type="chain" id="PRO_0000313600" description="Hydroxyacylglutathione hydrolase-like protein">
    <location>
        <begin position="1"/>
        <end position="193"/>
    </location>
</feature>
<feature type="binding site" evidence="1">
    <location>
        <position position="54"/>
    </location>
    <ligand>
        <name>Zn(2+)</name>
        <dbReference type="ChEBI" id="CHEBI:29105"/>
        <label>1</label>
    </ligand>
</feature>
<feature type="binding site" evidence="1">
    <location>
        <position position="56"/>
    </location>
    <ligand>
        <name>Zn(2+)</name>
        <dbReference type="ChEBI" id="CHEBI:29105"/>
        <label>1</label>
    </ligand>
</feature>
<feature type="binding site" evidence="1">
    <location>
        <position position="58"/>
    </location>
    <ligand>
        <name>Zn(2+)</name>
        <dbReference type="ChEBI" id="CHEBI:29105"/>
        <label>2</label>
    </ligand>
</feature>
<feature type="binding site" evidence="1">
    <location>
        <position position="59"/>
    </location>
    <ligand>
        <name>Zn(2+)</name>
        <dbReference type="ChEBI" id="CHEBI:29105"/>
        <label>2</label>
    </ligand>
</feature>
<feature type="binding site" evidence="1">
    <location>
        <position position="110"/>
    </location>
    <ligand>
        <name>Zn(2+)</name>
        <dbReference type="ChEBI" id="CHEBI:29105"/>
        <label>1</label>
    </ligand>
</feature>
<sequence length="193" mass="21696">MKVKVIPVLEDNYMYLVIEERTREAVAVDVAVPKRLLEIVGRERVSLTTVLTTHHHWDHARGNAELARLLPGLVVLGADERICALTRRLAHGEELRFGAIHVRCLLTPGHTLGHMSYFLWEEECPDPPAVFSGTGCPVPTCPTSPCPIPLSLTHPTPQGMHCPWPAAAHAWRAQFSRCTRAWWRPWAPCPLRQ</sequence>
<organism>
    <name type="scientific">Bos taurus</name>
    <name type="common">Bovine</name>
    <dbReference type="NCBI Taxonomy" id="9913"/>
    <lineage>
        <taxon>Eukaryota</taxon>
        <taxon>Metazoa</taxon>
        <taxon>Chordata</taxon>
        <taxon>Craniata</taxon>
        <taxon>Vertebrata</taxon>
        <taxon>Euteleostomi</taxon>
        <taxon>Mammalia</taxon>
        <taxon>Eutheria</taxon>
        <taxon>Laurasiatheria</taxon>
        <taxon>Artiodactyla</taxon>
        <taxon>Ruminantia</taxon>
        <taxon>Pecora</taxon>
        <taxon>Bovidae</taxon>
        <taxon>Bovinae</taxon>
        <taxon>Bos</taxon>
    </lineage>
</organism>
<gene>
    <name type="primary">HAGHL</name>
</gene>
<accession>Q0VBY3</accession>
<comment type="function">
    <text evidence="2">Hydrolase acting on ester bonds.</text>
</comment>
<comment type="cofactor">
    <cofactor evidence="1">
        <name>Zn(2+)</name>
        <dbReference type="ChEBI" id="CHEBI:29105"/>
    </cofactor>
    <text evidence="1">Binds 2 Zn(2+) ions per subunit.</text>
</comment>
<comment type="similarity">
    <text evidence="2">Belongs to the metallo-beta-lactamase superfamily. Glyoxalase II family.</text>
</comment>